<organism>
    <name type="scientific">Oryza sativa subsp. japonica</name>
    <name type="common">Rice</name>
    <dbReference type="NCBI Taxonomy" id="39947"/>
    <lineage>
        <taxon>Eukaryota</taxon>
        <taxon>Viridiplantae</taxon>
        <taxon>Streptophyta</taxon>
        <taxon>Embryophyta</taxon>
        <taxon>Tracheophyta</taxon>
        <taxon>Spermatophyta</taxon>
        <taxon>Magnoliopsida</taxon>
        <taxon>Liliopsida</taxon>
        <taxon>Poales</taxon>
        <taxon>Poaceae</taxon>
        <taxon>BOP clade</taxon>
        <taxon>Oryzoideae</taxon>
        <taxon>Oryzeae</taxon>
        <taxon>Oryzinae</taxon>
        <taxon>Oryza</taxon>
        <taxon>Oryza sativa</taxon>
    </lineage>
</organism>
<reference key="1">
    <citation type="journal article" date="2005" name="Mol. Genet. Genomics">
        <title>A fine physical map of the rice chromosome 5.</title>
        <authorList>
            <person name="Cheng C.-H."/>
            <person name="Chung M.C."/>
            <person name="Liu S.-M."/>
            <person name="Chen S.-K."/>
            <person name="Kao F.Y."/>
            <person name="Lin S.-J."/>
            <person name="Hsiao S.-H."/>
            <person name="Tseng I.C."/>
            <person name="Hsing Y.-I.C."/>
            <person name="Wu H.-P."/>
            <person name="Chen C.-S."/>
            <person name="Shaw J.-F."/>
            <person name="Wu J."/>
            <person name="Matsumoto T."/>
            <person name="Sasaki T."/>
            <person name="Chen H.-C."/>
            <person name="Chow T.-Y."/>
        </authorList>
    </citation>
    <scope>NUCLEOTIDE SEQUENCE [LARGE SCALE GENOMIC DNA]</scope>
    <source>
        <strain>cv. Nipponbare</strain>
    </source>
</reference>
<reference key="2">
    <citation type="journal article" date="2005" name="Nature">
        <title>The map-based sequence of the rice genome.</title>
        <authorList>
            <consortium name="International rice genome sequencing project (IRGSP)"/>
        </authorList>
    </citation>
    <scope>NUCLEOTIDE SEQUENCE [LARGE SCALE GENOMIC DNA]</scope>
    <source>
        <strain>cv. Nipponbare</strain>
    </source>
</reference>
<reference key="3">
    <citation type="journal article" date="2008" name="Nucleic Acids Res.">
        <title>The rice annotation project database (RAP-DB): 2008 update.</title>
        <authorList>
            <consortium name="The rice annotation project (RAP)"/>
        </authorList>
    </citation>
    <scope>GENOME REANNOTATION</scope>
    <source>
        <strain>cv. Nipponbare</strain>
    </source>
</reference>
<reference key="4">
    <citation type="journal article" date="2013" name="Rice">
        <title>Improvement of the Oryza sativa Nipponbare reference genome using next generation sequence and optical map data.</title>
        <authorList>
            <person name="Kawahara Y."/>
            <person name="de la Bastide M."/>
            <person name="Hamilton J.P."/>
            <person name="Kanamori H."/>
            <person name="McCombie W.R."/>
            <person name="Ouyang S."/>
            <person name="Schwartz D.C."/>
            <person name="Tanaka T."/>
            <person name="Wu J."/>
            <person name="Zhou S."/>
            <person name="Childs K.L."/>
            <person name="Davidson R.M."/>
            <person name="Lin H."/>
            <person name="Quesada-Ocampo L."/>
            <person name="Vaillancourt B."/>
            <person name="Sakai H."/>
            <person name="Lee S.S."/>
            <person name="Kim J."/>
            <person name="Numa H."/>
            <person name="Itoh T."/>
            <person name="Buell C.R."/>
            <person name="Matsumoto T."/>
        </authorList>
    </citation>
    <scope>GENOME REANNOTATION</scope>
    <source>
        <strain>cv. Nipponbare</strain>
    </source>
</reference>
<reference key="5">
    <citation type="journal article" date="2005" name="PLoS Biol.">
        <title>The genomes of Oryza sativa: a history of duplications.</title>
        <authorList>
            <person name="Yu J."/>
            <person name="Wang J."/>
            <person name="Lin W."/>
            <person name="Li S."/>
            <person name="Li H."/>
            <person name="Zhou J."/>
            <person name="Ni P."/>
            <person name="Dong W."/>
            <person name="Hu S."/>
            <person name="Zeng C."/>
            <person name="Zhang J."/>
            <person name="Zhang Y."/>
            <person name="Li R."/>
            <person name="Xu Z."/>
            <person name="Li S."/>
            <person name="Li X."/>
            <person name="Zheng H."/>
            <person name="Cong L."/>
            <person name="Lin L."/>
            <person name="Yin J."/>
            <person name="Geng J."/>
            <person name="Li G."/>
            <person name="Shi J."/>
            <person name="Liu J."/>
            <person name="Lv H."/>
            <person name="Li J."/>
            <person name="Wang J."/>
            <person name="Deng Y."/>
            <person name="Ran L."/>
            <person name="Shi X."/>
            <person name="Wang X."/>
            <person name="Wu Q."/>
            <person name="Li C."/>
            <person name="Ren X."/>
            <person name="Wang J."/>
            <person name="Wang X."/>
            <person name="Li D."/>
            <person name="Liu D."/>
            <person name="Zhang X."/>
            <person name="Ji Z."/>
            <person name="Zhao W."/>
            <person name="Sun Y."/>
            <person name="Zhang Z."/>
            <person name="Bao J."/>
            <person name="Han Y."/>
            <person name="Dong L."/>
            <person name="Ji J."/>
            <person name="Chen P."/>
            <person name="Wu S."/>
            <person name="Liu J."/>
            <person name="Xiao Y."/>
            <person name="Bu D."/>
            <person name="Tan J."/>
            <person name="Yang L."/>
            <person name="Ye C."/>
            <person name="Zhang J."/>
            <person name="Xu J."/>
            <person name="Zhou Y."/>
            <person name="Yu Y."/>
            <person name="Zhang B."/>
            <person name="Zhuang S."/>
            <person name="Wei H."/>
            <person name="Liu B."/>
            <person name="Lei M."/>
            <person name="Yu H."/>
            <person name="Li Y."/>
            <person name="Xu H."/>
            <person name="Wei S."/>
            <person name="He X."/>
            <person name="Fang L."/>
            <person name="Zhang Z."/>
            <person name="Zhang Y."/>
            <person name="Huang X."/>
            <person name="Su Z."/>
            <person name="Tong W."/>
            <person name="Li J."/>
            <person name="Tong Z."/>
            <person name="Li S."/>
            <person name="Ye J."/>
            <person name="Wang L."/>
            <person name="Fang L."/>
            <person name="Lei T."/>
            <person name="Chen C.-S."/>
            <person name="Chen H.-C."/>
            <person name="Xu Z."/>
            <person name="Li H."/>
            <person name="Huang H."/>
            <person name="Zhang F."/>
            <person name="Xu H."/>
            <person name="Li N."/>
            <person name="Zhao C."/>
            <person name="Li S."/>
            <person name="Dong L."/>
            <person name="Huang Y."/>
            <person name="Li L."/>
            <person name="Xi Y."/>
            <person name="Qi Q."/>
            <person name="Li W."/>
            <person name="Zhang B."/>
            <person name="Hu W."/>
            <person name="Zhang Y."/>
            <person name="Tian X."/>
            <person name="Jiao Y."/>
            <person name="Liang X."/>
            <person name="Jin J."/>
            <person name="Gao L."/>
            <person name="Zheng W."/>
            <person name="Hao B."/>
            <person name="Liu S.-M."/>
            <person name="Wang W."/>
            <person name="Yuan L."/>
            <person name="Cao M."/>
            <person name="McDermott J."/>
            <person name="Samudrala R."/>
            <person name="Wang J."/>
            <person name="Wong G.K.-S."/>
            <person name="Yang H."/>
        </authorList>
    </citation>
    <scope>NUCLEOTIDE SEQUENCE [LARGE SCALE GENOMIC DNA]</scope>
    <source>
        <strain>cv. Nipponbare</strain>
    </source>
</reference>
<reference key="6">
    <citation type="journal article" date="2003" name="Science">
        <title>Collection, mapping, and annotation of over 28,000 cDNA clones from japonica rice.</title>
        <authorList>
            <consortium name="The rice full-length cDNA consortium"/>
        </authorList>
    </citation>
    <scope>NUCLEOTIDE SEQUENCE [LARGE SCALE MRNA]</scope>
    <source>
        <strain>cv. Nipponbare</strain>
    </source>
</reference>
<reference key="7">
    <citation type="journal article" date="2008" name="BMC Genomics">
        <title>Genome-wide and expression analysis of protein phosphatase 2C in rice and Arabidopsis.</title>
        <authorList>
            <person name="Xue T."/>
            <person name="Wang D."/>
            <person name="Zhang S."/>
            <person name="Ehlting J."/>
            <person name="Ni F."/>
            <person name="Jacab S."/>
            <person name="Zheng C."/>
            <person name="Zhong Y."/>
        </authorList>
    </citation>
    <scope>GENE FAMILY</scope>
    <scope>NOMENCLATURE</scope>
</reference>
<feature type="chain" id="PRO_0000363299" description="Probable protein phosphatase 2C 52">
    <location>
        <begin position="1"/>
        <end position="491"/>
    </location>
</feature>
<feature type="domain" description="PPM-type phosphatase" evidence="2">
    <location>
        <begin position="229"/>
        <end position="475"/>
    </location>
</feature>
<feature type="region of interest" description="Disordered" evidence="3">
    <location>
        <begin position="1"/>
        <end position="211"/>
    </location>
</feature>
<feature type="compositionally biased region" description="Basic and acidic residues" evidence="3">
    <location>
        <begin position="1"/>
        <end position="11"/>
    </location>
</feature>
<feature type="compositionally biased region" description="Low complexity" evidence="3">
    <location>
        <begin position="12"/>
        <end position="54"/>
    </location>
</feature>
<feature type="compositionally biased region" description="Basic residues" evidence="3">
    <location>
        <begin position="66"/>
        <end position="78"/>
    </location>
</feature>
<feature type="compositionally biased region" description="Acidic residues" evidence="3">
    <location>
        <begin position="95"/>
        <end position="105"/>
    </location>
</feature>
<feature type="compositionally biased region" description="Basic and acidic residues" evidence="3">
    <location>
        <begin position="187"/>
        <end position="211"/>
    </location>
</feature>
<feature type="binding site" evidence="1">
    <location>
        <position position="265"/>
    </location>
    <ligand>
        <name>Mn(2+)</name>
        <dbReference type="ChEBI" id="CHEBI:29035"/>
        <label>1</label>
    </ligand>
</feature>
<feature type="binding site" evidence="1">
    <location>
        <position position="265"/>
    </location>
    <ligand>
        <name>Mn(2+)</name>
        <dbReference type="ChEBI" id="CHEBI:29035"/>
        <label>2</label>
    </ligand>
</feature>
<feature type="binding site" evidence="1">
    <location>
        <position position="266"/>
    </location>
    <ligand>
        <name>Mn(2+)</name>
        <dbReference type="ChEBI" id="CHEBI:29035"/>
        <label>1</label>
    </ligand>
</feature>
<feature type="binding site" evidence="1">
    <location>
        <position position="427"/>
    </location>
    <ligand>
        <name>Mn(2+)</name>
        <dbReference type="ChEBI" id="CHEBI:29035"/>
        <label>2</label>
    </ligand>
</feature>
<feature type="binding site" evidence="1">
    <location>
        <position position="466"/>
    </location>
    <ligand>
        <name>Mn(2+)</name>
        <dbReference type="ChEBI" id="CHEBI:29035"/>
        <label>2</label>
    </ligand>
</feature>
<comment type="catalytic activity">
    <reaction>
        <text>O-phospho-L-seryl-[protein] + H2O = L-seryl-[protein] + phosphate</text>
        <dbReference type="Rhea" id="RHEA:20629"/>
        <dbReference type="Rhea" id="RHEA-COMP:9863"/>
        <dbReference type="Rhea" id="RHEA-COMP:11604"/>
        <dbReference type="ChEBI" id="CHEBI:15377"/>
        <dbReference type="ChEBI" id="CHEBI:29999"/>
        <dbReference type="ChEBI" id="CHEBI:43474"/>
        <dbReference type="ChEBI" id="CHEBI:83421"/>
        <dbReference type="EC" id="3.1.3.16"/>
    </reaction>
</comment>
<comment type="catalytic activity">
    <reaction>
        <text>O-phospho-L-threonyl-[protein] + H2O = L-threonyl-[protein] + phosphate</text>
        <dbReference type="Rhea" id="RHEA:47004"/>
        <dbReference type="Rhea" id="RHEA-COMP:11060"/>
        <dbReference type="Rhea" id="RHEA-COMP:11605"/>
        <dbReference type="ChEBI" id="CHEBI:15377"/>
        <dbReference type="ChEBI" id="CHEBI:30013"/>
        <dbReference type="ChEBI" id="CHEBI:43474"/>
        <dbReference type="ChEBI" id="CHEBI:61977"/>
        <dbReference type="EC" id="3.1.3.16"/>
    </reaction>
</comment>
<comment type="cofactor">
    <cofactor evidence="1">
        <name>Mg(2+)</name>
        <dbReference type="ChEBI" id="CHEBI:18420"/>
    </cofactor>
    <cofactor evidence="1">
        <name>Mn(2+)</name>
        <dbReference type="ChEBI" id="CHEBI:29035"/>
    </cofactor>
    <text evidence="1">Binds 2 magnesium or manganese ions per subunit.</text>
</comment>
<comment type="similarity">
    <text evidence="4">Belongs to the PP2C family.</text>
</comment>
<dbReference type="EC" id="3.1.3.16"/>
<dbReference type="EMBL" id="AC098598">
    <property type="protein sequence ID" value="AAT44157.1"/>
    <property type="molecule type" value="Genomic_DNA"/>
</dbReference>
<dbReference type="EMBL" id="AP008211">
    <property type="protein sequence ID" value="BAF18381.1"/>
    <property type="molecule type" value="Genomic_DNA"/>
</dbReference>
<dbReference type="EMBL" id="AP014961">
    <property type="protein sequence ID" value="BAS95584.1"/>
    <property type="molecule type" value="Genomic_DNA"/>
</dbReference>
<dbReference type="EMBL" id="CM000138">
    <property type="protein sequence ID" value="EAZ10400.1"/>
    <property type="molecule type" value="Genomic_DNA"/>
</dbReference>
<dbReference type="EMBL" id="AK101645">
    <property type="protein sequence ID" value="BAG95168.1"/>
    <property type="molecule type" value="mRNA"/>
</dbReference>
<dbReference type="RefSeq" id="XP_015640009.1">
    <property type="nucleotide sequence ID" value="XM_015784523.1"/>
</dbReference>
<dbReference type="SMR" id="Q6L5C4"/>
<dbReference type="FunCoup" id="Q6L5C4">
    <property type="interactions" value="1186"/>
</dbReference>
<dbReference type="STRING" id="39947.Q6L5C4"/>
<dbReference type="PaxDb" id="39947-Q6L5C4"/>
<dbReference type="EnsemblPlants" id="Os05t0587100-01">
    <property type="protein sequence ID" value="Os05t0587100-01"/>
    <property type="gene ID" value="Os05g0587100"/>
</dbReference>
<dbReference type="Gramene" id="Os05t0587100-01">
    <property type="protein sequence ID" value="Os05t0587100-01"/>
    <property type="gene ID" value="Os05g0587100"/>
</dbReference>
<dbReference type="KEGG" id="dosa:Os05g0587100"/>
<dbReference type="eggNOG" id="KOG0698">
    <property type="taxonomic scope" value="Eukaryota"/>
</dbReference>
<dbReference type="HOGENOM" id="CLU_013173_0_0_1"/>
<dbReference type="InParanoid" id="Q6L5C4"/>
<dbReference type="OMA" id="DMRADNL"/>
<dbReference type="OrthoDB" id="10264738at2759"/>
<dbReference type="Proteomes" id="UP000000763">
    <property type="component" value="Chromosome 5"/>
</dbReference>
<dbReference type="Proteomes" id="UP000007752">
    <property type="component" value="Chromosome 1"/>
</dbReference>
<dbReference type="Proteomes" id="UP000059680">
    <property type="component" value="Chromosome 5"/>
</dbReference>
<dbReference type="GO" id="GO:0046872">
    <property type="term" value="F:metal ion binding"/>
    <property type="evidence" value="ECO:0007669"/>
    <property type="project" value="UniProtKB-KW"/>
</dbReference>
<dbReference type="GO" id="GO:0004722">
    <property type="term" value="F:protein serine/threonine phosphatase activity"/>
    <property type="evidence" value="ECO:0007669"/>
    <property type="project" value="UniProtKB-EC"/>
</dbReference>
<dbReference type="GO" id="GO:0007165">
    <property type="term" value="P:signal transduction"/>
    <property type="evidence" value="ECO:0000318"/>
    <property type="project" value="GO_Central"/>
</dbReference>
<dbReference type="CDD" id="cd00143">
    <property type="entry name" value="PP2Cc"/>
    <property type="match status" value="1"/>
</dbReference>
<dbReference type="FunFam" id="3.60.40.10:FF:000027">
    <property type="entry name" value="Probable protein phosphatase 2C 76"/>
    <property type="match status" value="1"/>
</dbReference>
<dbReference type="Gene3D" id="3.60.40.10">
    <property type="entry name" value="PPM-type phosphatase domain"/>
    <property type="match status" value="1"/>
</dbReference>
<dbReference type="InterPro" id="IPR015655">
    <property type="entry name" value="PP2C"/>
</dbReference>
<dbReference type="InterPro" id="IPR000222">
    <property type="entry name" value="PP2C_BS"/>
</dbReference>
<dbReference type="InterPro" id="IPR036457">
    <property type="entry name" value="PPM-type-like_dom_sf"/>
</dbReference>
<dbReference type="InterPro" id="IPR001932">
    <property type="entry name" value="PPM-type_phosphatase-like_dom"/>
</dbReference>
<dbReference type="PANTHER" id="PTHR47992">
    <property type="entry name" value="PROTEIN PHOSPHATASE"/>
    <property type="match status" value="1"/>
</dbReference>
<dbReference type="Pfam" id="PF00481">
    <property type="entry name" value="PP2C"/>
    <property type="match status" value="1"/>
</dbReference>
<dbReference type="SMART" id="SM00331">
    <property type="entry name" value="PP2C_SIG"/>
    <property type="match status" value="1"/>
</dbReference>
<dbReference type="SMART" id="SM00332">
    <property type="entry name" value="PP2Cc"/>
    <property type="match status" value="1"/>
</dbReference>
<dbReference type="SUPFAM" id="SSF81606">
    <property type="entry name" value="PP2C-like"/>
    <property type="match status" value="1"/>
</dbReference>
<dbReference type="PROSITE" id="PS01032">
    <property type="entry name" value="PPM_1"/>
    <property type="match status" value="1"/>
</dbReference>
<dbReference type="PROSITE" id="PS51746">
    <property type="entry name" value="PPM_2"/>
    <property type="match status" value="1"/>
</dbReference>
<proteinExistence type="evidence at transcript level"/>
<evidence type="ECO:0000250" key="1"/>
<evidence type="ECO:0000255" key="2">
    <source>
        <dbReference type="PROSITE-ProRule" id="PRU01082"/>
    </source>
</evidence>
<evidence type="ECO:0000256" key="3">
    <source>
        <dbReference type="SAM" id="MobiDB-lite"/>
    </source>
</evidence>
<evidence type="ECO:0000305" key="4"/>
<name>P2C52_ORYSJ</name>
<sequence length="491" mass="52919">MVYDGAVKDQESSANPASASAALSEASAAASEVTAAAAAGAGAGAAEEGAAVSGRPPRPPHDKRLGVRHPLKHRRFRAGGKVMVEPGDPPSAQEVADEEASEVEQEAAPVEREPPQEEGGDVEVSSAPAEMEVVEGDAMEVSPEPAVAVGESELEGRPGEEEEVSSPVVSQGERKQETAAAAPVPAVEEKKHKDQENKHKEREREKERERVDEVGYMSGGWKSEDGFLSCGYSSFRGKRASMEDFYDIKSSKIDDKQISLFGIFDGHGGSRAAEYLKEHLFENLMKHPEFMTNTKLAISETYKKTDSEFLDSESHTHRDDGSTASTAVLVGNHLYVANVGDSRAVISKAGKAIALSEDHKPNRSDERKRIESAGGVVMWAGTWRVGGVLAMSRAFGNRLLKQFVVADPEIQEQEIDDELEFLILASDGLWDVVPNEDAVSLVKIEEEPEAAARKLTETAFSRGSGDNITCIVVKFQHDKMDGDSSPTSDKS</sequence>
<keyword id="KW-0378">Hydrolase</keyword>
<keyword id="KW-0460">Magnesium</keyword>
<keyword id="KW-0464">Manganese</keyword>
<keyword id="KW-0479">Metal-binding</keyword>
<keyword id="KW-0904">Protein phosphatase</keyword>
<keyword id="KW-1185">Reference proteome</keyword>
<protein>
    <recommendedName>
        <fullName>Probable protein phosphatase 2C 52</fullName>
        <shortName>OsPP2C52</shortName>
        <ecNumber>3.1.3.16</ecNumber>
    </recommendedName>
</protein>
<gene>
    <name type="ordered locus">Os05g0587100</name>
    <name type="ordered locus">LOC_Os05g50970</name>
    <name type="ORF">OJ1007_H05.6</name>
    <name type="ORF">OsJ_000225</name>
</gene>
<accession>Q6L5C4</accession>
<accession>A0A0P0WR20</accession>